<name>PYCC1_ECOLX</name>
<feature type="chain" id="PRO_0000455218" description="Cytidylate cyclase">
    <location>
        <begin position="1"/>
        <end position="450"/>
    </location>
</feature>
<feature type="domain" description="Guanylate cyclase" evidence="3">
    <location>
        <begin position="97"/>
        <end position="236"/>
    </location>
</feature>
<feature type="region of interest" description="AGS-C domain" evidence="7">
    <location>
        <begin position="318"/>
        <end position="450"/>
    </location>
</feature>
<feature type="binding site" evidence="2 7">
    <location>
        <position position="100"/>
    </location>
    <ligand>
        <name>a ribonucleoside 5'-triphosphate</name>
        <dbReference type="ChEBI" id="CHEBI:61557"/>
    </ligand>
</feature>
<feature type="binding site" evidence="7">
    <location>
        <position position="102"/>
    </location>
    <ligand>
        <name>Mn(2+)</name>
        <dbReference type="ChEBI" id="CHEBI:29035"/>
        <label>1</label>
    </ligand>
</feature>
<feature type="binding site" evidence="7">
    <location>
        <position position="102"/>
    </location>
    <ligand>
        <name>Mn(2+)</name>
        <dbReference type="ChEBI" id="CHEBI:29035"/>
        <label>2</label>
    </ligand>
</feature>
<feature type="binding site" evidence="7">
    <location>
        <position position="103"/>
    </location>
    <ligand>
        <name>Mn(2+)</name>
        <dbReference type="ChEBI" id="CHEBI:29035"/>
        <label>2</label>
    </ligand>
</feature>
<feature type="binding site" evidence="7">
    <location>
        <position position="146"/>
    </location>
    <ligand>
        <name>Mn(2+)</name>
        <dbReference type="ChEBI" id="CHEBI:29035"/>
        <label>1</label>
    </ligand>
</feature>
<feature type="binding site" evidence="7">
    <location>
        <position position="146"/>
    </location>
    <ligand>
        <name>Mn(2+)</name>
        <dbReference type="ChEBI" id="CHEBI:29035"/>
        <label>2</label>
    </ligand>
</feature>
<feature type="mutagenesis site" description="Loss of phage T5 resistance, wild-type cCMP production." evidence="4">
    <original>F</original>
    <variation>A</variation>
    <location>
        <position position="100"/>
    </location>
</feature>
<feature type="mutagenesis site" description="Loss of phage T5 resistance, no cCMP production." evidence="4">
    <original>D</original>
    <variation>A</variation>
    <location>
        <position position="102"/>
    </location>
</feature>
<feature type="mutagenesis site" description="Loss of phage T5 resistance, no cCMP production." evidence="4">
    <original>R</original>
    <variation>A</variation>
    <location>
        <position position="142"/>
    </location>
</feature>
<feature type="mutagenesis site" description="Loss of phage T5 resistance, wild-type cCMP production." evidence="4">
    <original>M</original>
    <variation>A</variation>
    <location>
        <position position="144"/>
    </location>
</feature>
<feature type="mutagenesis site" description="Loss of phage T5 resistance, no cCMP production." evidence="4">
    <original>D</original>
    <variation>A</variation>
    <location>
        <position position="146"/>
    </location>
</feature>
<feature type="mutagenesis site" description="Wild-type cCMP production." evidence="4">
    <original>D</original>
    <variation>A</variation>
    <location>
        <position position="230"/>
    </location>
</feature>
<feature type="mutagenesis site" description="Wild-type cCMP production." evidence="4">
    <original>Q</original>
    <variation>A</variation>
    <location>
        <position position="237"/>
    </location>
</feature>
<feature type="strand" evidence="8">
    <location>
        <begin position="321"/>
        <end position="329"/>
    </location>
</feature>
<feature type="strand" evidence="8">
    <location>
        <begin position="332"/>
        <end position="335"/>
    </location>
</feature>
<feature type="strand" evidence="8">
    <location>
        <begin position="341"/>
        <end position="343"/>
    </location>
</feature>
<feature type="strand" evidence="8">
    <location>
        <begin position="348"/>
        <end position="355"/>
    </location>
</feature>
<feature type="strand" evidence="8">
    <location>
        <begin position="361"/>
        <end position="374"/>
    </location>
</feature>
<feature type="helix" evidence="8">
    <location>
        <begin position="379"/>
        <end position="381"/>
    </location>
</feature>
<feature type="strand" evidence="8">
    <location>
        <begin position="383"/>
        <end position="390"/>
    </location>
</feature>
<feature type="strand" evidence="8">
    <location>
        <begin position="393"/>
        <end position="399"/>
    </location>
</feature>
<feature type="strand" evidence="8">
    <location>
        <begin position="404"/>
        <end position="407"/>
    </location>
</feature>
<feature type="strand" evidence="8">
    <location>
        <begin position="412"/>
        <end position="419"/>
    </location>
</feature>
<feature type="strand" evidence="8">
    <location>
        <begin position="422"/>
        <end position="434"/>
    </location>
</feature>
<feature type="turn" evidence="8">
    <location>
        <begin position="435"/>
        <end position="437"/>
    </location>
</feature>
<feature type="strand" evidence="8">
    <location>
        <begin position="438"/>
        <end position="449"/>
    </location>
</feature>
<accession>P0DV24</accession>
<dbReference type="EC" id="4.6.1.6" evidence="4"/>
<dbReference type="EMBL" id="CXXA01000028">
    <property type="status" value="NOT_ANNOTATED_CDS"/>
    <property type="molecule type" value="Genomic_DNA"/>
</dbReference>
<dbReference type="RefSeq" id="WP_053265929.1">
    <property type="nucleotide sequence ID" value="NZ_CXXA01000028.1"/>
</dbReference>
<dbReference type="PDB" id="9ARD">
    <property type="method" value="X-ray"/>
    <property type="resolution" value="1.63 A"/>
    <property type="chains" value="A/B=320-450"/>
</dbReference>
<dbReference type="PDBsum" id="9ARD"/>
<dbReference type="SMR" id="P0DV24"/>
<dbReference type="GO" id="GO:0005737">
    <property type="term" value="C:cytoplasm"/>
    <property type="evidence" value="ECO:0007669"/>
    <property type="project" value="UniProtKB-SubCell"/>
</dbReference>
<dbReference type="GO" id="GO:0004016">
    <property type="term" value="F:adenylate cyclase activity"/>
    <property type="evidence" value="ECO:0007669"/>
    <property type="project" value="UniProtKB-ARBA"/>
</dbReference>
<dbReference type="GO" id="GO:0046872">
    <property type="term" value="F:metal ion binding"/>
    <property type="evidence" value="ECO:0007669"/>
    <property type="project" value="UniProtKB-KW"/>
</dbReference>
<dbReference type="GO" id="GO:0000166">
    <property type="term" value="F:nucleotide binding"/>
    <property type="evidence" value="ECO:0007669"/>
    <property type="project" value="UniProtKB-KW"/>
</dbReference>
<dbReference type="GO" id="GO:0009190">
    <property type="term" value="P:cyclic nucleotide biosynthetic process"/>
    <property type="evidence" value="ECO:0007669"/>
    <property type="project" value="InterPro"/>
</dbReference>
<dbReference type="GO" id="GO:0051607">
    <property type="term" value="P:defense response to virus"/>
    <property type="evidence" value="ECO:0007669"/>
    <property type="project" value="UniProtKB-KW"/>
</dbReference>
<dbReference type="GO" id="GO:0035556">
    <property type="term" value="P:intracellular signal transduction"/>
    <property type="evidence" value="ECO:0007669"/>
    <property type="project" value="InterPro"/>
</dbReference>
<dbReference type="Gene3D" id="3.30.70.1230">
    <property type="entry name" value="Nucleotide cyclase"/>
    <property type="match status" value="1"/>
</dbReference>
<dbReference type="InterPro" id="IPR001054">
    <property type="entry name" value="A/G_cyclase"/>
</dbReference>
<dbReference type="InterPro" id="IPR040511">
    <property type="entry name" value="AGS_C"/>
</dbReference>
<dbReference type="InterPro" id="IPR029787">
    <property type="entry name" value="Nucleotide_cyclase"/>
</dbReference>
<dbReference type="Pfam" id="PF18134">
    <property type="entry name" value="AGS_C"/>
    <property type="match status" value="1"/>
</dbReference>
<dbReference type="SUPFAM" id="SSF55073">
    <property type="entry name" value="Nucleotide cyclase"/>
    <property type="match status" value="1"/>
</dbReference>
<dbReference type="PROSITE" id="PS50125">
    <property type="entry name" value="GUANYLATE_CYCLASE_2"/>
    <property type="match status" value="1"/>
</dbReference>
<comment type="function">
    <text evidence="4">Pycsar (pyrimidine cyclase system for antiphage resistance) provides immunity against bacteriophage. The pyrimidine cyclase (PycC) synthesizes cyclic nucleotides in response to infection; these serve as specific second messenger signals. The signal activates the adjacent effector, leading to bacterial cell death and abortive phage infection. A clade E Pycsar system.</text>
</comment>
<comment type="function">
    <text evidence="4">The pyrimidine cyclase gene of a two-gene Pycsar system, generates cyclic CMP (cCMP) from CTP in response to bacteriophage infection. Has little to no activity on ATP, GTP or UTP. Expression of this and adjacent effector EcPycTM (AC P0DV25) confers resistance to bacteriophage P1 and T5; expression of this gene alone does not confer resistance. When cells expressing the Pycsar system are infected by phage T5 at low multiplicity of infection (0.2 MOI) the culture survives, at 2.0 MOI bacteria enter growth arrest. The same cells enter growth arrest after exposure to 250 uM cCMP but not cUMP; thus the effector protein responds only to the cNMP produced by its cognate NTP cyclase. Some of the cells treated with cCMP have abnormal membrane protrusions.</text>
</comment>
<comment type="catalytic activity">
    <reaction evidence="4">
        <text>CTP = 3',5'-cyclic CMP + diphosphate</text>
        <dbReference type="Rhea" id="RHEA:14737"/>
        <dbReference type="ChEBI" id="CHEBI:33019"/>
        <dbReference type="ChEBI" id="CHEBI:37563"/>
        <dbReference type="ChEBI" id="CHEBI:58003"/>
        <dbReference type="EC" id="4.6.1.6"/>
    </reaction>
</comment>
<comment type="cofactor">
    <cofactor evidence="4">
        <name>Mn(2+)</name>
        <dbReference type="ChEBI" id="CHEBI:29035"/>
    </cofactor>
    <text evidence="4">Cannot be replaced by Mg(2+).</text>
</comment>
<comment type="activity regulation">
    <text evidence="4">In E.coli strain MG1655 transformed with both genes cCMP appears between 15 and 30 minutes after infection with phage T5 (at protein level). No cCMP accumulates in uninfected cells.</text>
</comment>
<comment type="biophysicochemical properties">
    <phDependence>
        <text evidence="4">Optimum pH is 7.5-9.0.</text>
    </phDependence>
</comment>
<comment type="subunit">
    <text evidence="1">Homodimer.</text>
</comment>
<comment type="subcellular location">
    <subcellularLocation>
        <location evidence="6">Cytoplasm</location>
    </subcellularLocation>
</comment>
<comment type="domain">
    <text evidence="4">Has an N-terminal nucleotide cyclase domain and a C-terminal nucleotide sensor domain (AGS-C); removal of the latter leads to loss of phage P1 and T5 resistance.</text>
</comment>
<comment type="miscellaneous">
    <text evidence="4">T5 phage that escape Pycsar have mutated major capsid protein pb8 (D20, AC Q6QGD8); infection with these phage elicits less cCMP production. Ectopic expression of the capsid protein in addition to both Pycsar genes does not induce effector-mediated toxicity, suggesting another factor is necessary.</text>
</comment>
<comment type="similarity">
    <text evidence="7">Belongs to the adenylyl cyclase class-4/guanylyl cyclase family. Pyrimidine cyclase subfamily.</text>
</comment>
<keyword id="KW-0002">3D-structure</keyword>
<keyword id="KW-0051">Antiviral defense</keyword>
<keyword id="KW-0963">Cytoplasm</keyword>
<keyword id="KW-0456">Lyase</keyword>
<keyword id="KW-0464">Manganese</keyword>
<keyword id="KW-0479">Metal-binding</keyword>
<keyword id="KW-0547">Nucleotide-binding</keyword>
<gene>
    <name evidence="5" type="primary">pycC</name>
    <name type="ORF">Ga0132381_1285</name>
</gene>
<proteinExistence type="evidence at protein level"/>
<organism>
    <name type="scientific">Escherichia coli</name>
    <dbReference type="NCBI Taxonomy" id="562"/>
    <lineage>
        <taxon>Bacteria</taxon>
        <taxon>Pseudomonadati</taxon>
        <taxon>Pseudomonadota</taxon>
        <taxon>Gammaproteobacteria</taxon>
        <taxon>Enterobacterales</taxon>
        <taxon>Enterobacteriaceae</taxon>
        <taxon>Escherichia</taxon>
    </lineage>
</organism>
<evidence type="ECO:0000250" key="1">
    <source>
        <dbReference type="UniProtKB" id="A0A0J5ZXG5"/>
    </source>
</evidence>
<evidence type="ECO:0000250" key="2">
    <source>
        <dbReference type="UniProtKB" id="P0DV40"/>
    </source>
</evidence>
<evidence type="ECO:0000255" key="3">
    <source>
        <dbReference type="PROSITE-ProRule" id="PRU00099"/>
    </source>
</evidence>
<evidence type="ECO:0000269" key="4">
    <source>
    </source>
</evidence>
<evidence type="ECO:0000303" key="5">
    <source>
    </source>
</evidence>
<evidence type="ECO:0000305" key="6"/>
<evidence type="ECO:0000305" key="7">
    <source>
    </source>
</evidence>
<evidence type="ECO:0007829" key="8">
    <source>
        <dbReference type="PDB" id="9ARD"/>
    </source>
</evidence>
<protein>
    <recommendedName>
        <fullName evidence="5">Cytidylate cyclase</fullName>
        <ecNumber evidence="4">4.6.1.6</ecNumber>
    </recommendedName>
    <alternativeName>
        <fullName>Cyclic CMP synthase</fullName>
        <shortName evidence="5">cCMP synthase</shortName>
    </alternativeName>
    <alternativeName>
        <fullName evidence="5">EcPycC</fullName>
    </alternativeName>
</protein>
<sequence length="450" mass="50981">MSFKDVTAKNFKGLKNVSLKKSMAMEGHTLVGTEARLGDAFELCESFSTSPSNIIEYEYQEEIRPFFQKAGLNKHSIGTHPELTGLGVGMIYNQYTVTMFVDIRKSSRLSLLLPLEQVYVVKNRILQACIDIVRALDGYPHRLMGDALMAFFGRSDVSKEDAIADAINAASTLRLILMDYIFPSLNEDIGEQIDLGVRIGLDYGAEDEVVWGNFGLGSFCEVTALGLPVDMTAKLQQLADKNTAMLGQGILDYIDFPEEYTKPKVKSGEELKYIIPNITNKEGQPINRRIRLLNMARYQELLPFKLNDKKMASAILYPNQFNFECFVIEDNKEVLYNSVSRFLPKKRRLTFKLSIYPGPGIGDLKIIFCKRNHGQEAKDDLSEDYSISIEDNKLIRVKNADNLSLLRKDGCYVLTVPEETLFRGLHTMEVIVRGNHETLFYRNIIGVYIK</sequence>
<reference key="1">
    <citation type="submission" date="2015-08" db="EMBL/GenBank/DDBJ databases">
        <authorList>
            <person name="Hur Y.J."/>
        </authorList>
    </citation>
    <scope>NUCLEOTIDE SEQUENCE [LARGE SCALE GENOMIC DNA]</scope>
    <source>
        <strain>E831</strain>
    </source>
</reference>
<reference key="2">
    <citation type="journal article" date="2021" name="Cell">
        <title>Cyclic CMP and cyclic UMP mediate bacterial immunity against phages.</title>
        <authorList>
            <person name="Tal N."/>
            <person name="Morehouse B.R."/>
            <person name="Millman A."/>
            <person name="Stokar-Avihail A."/>
            <person name="Avraham C."/>
            <person name="Fedorenko T."/>
            <person name="Yirmiya E."/>
            <person name="Herbst E."/>
            <person name="Brandis A."/>
            <person name="Mehlman T."/>
            <person name="Oppenheimer-Shaanan Y."/>
            <person name="Keszei A.F.A."/>
            <person name="Shao S."/>
            <person name="Amitai G."/>
            <person name="Kranzusch P.J."/>
            <person name="Sorek R."/>
        </authorList>
    </citation>
    <scope>FUNCTION</scope>
    <scope>CATALYTIC ACTIVITY</scope>
    <scope>SUBSTRATE SPECIFICITY</scope>
    <scope>COFACTOR</scope>
    <scope>ACTIVITY REGULATION BY VIRAL INFECTION</scope>
    <scope>BIOPHYSICOCHEMICAL PROPERTIES</scope>
    <scope>ANTIVIRAL DEFENSE</scope>
    <scope>DOMAIN</scope>
    <scope>CLASSIFICATION</scope>
    <scope>MUTAGENESIS OF PHE-100; ASP-102; ARG-142; MET-144; ASP-146; ASP-230 AND GLN-237</scope>
    <source>
        <strain>E831</strain>
    </source>
</reference>